<proteinExistence type="evidence at transcript level"/>
<keyword id="KW-0007">Acetylation</keyword>
<keyword id="KW-0053">Apoptosis</keyword>
<keyword id="KW-0067">ATP-binding</keyword>
<keyword id="KW-1003">Cell membrane</keyword>
<keyword id="KW-0406">Ion transport</keyword>
<keyword id="KW-1017">Isopeptide bond</keyword>
<keyword id="KW-0445">Lipid transport</keyword>
<keyword id="KW-0446">Lipid-binding</keyword>
<keyword id="KW-0472">Membrane</keyword>
<keyword id="KW-0496">Mitochondrion</keyword>
<keyword id="KW-1000">Mitochondrion outer membrane</keyword>
<keyword id="KW-0520">NAD</keyword>
<keyword id="KW-0547">Nucleotide-binding</keyword>
<keyword id="KW-0597">Phosphoprotein</keyword>
<keyword id="KW-0626">Porin</keyword>
<keyword id="KW-1185">Reference proteome</keyword>
<keyword id="KW-0812">Transmembrane</keyword>
<keyword id="KW-1134">Transmembrane beta strand</keyword>
<keyword id="KW-0813">Transport</keyword>
<keyword id="KW-0832">Ubl conjugation</keyword>
<organism>
    <name type="scientific">Sus scrofa</name>
    <name type="common">Pig</name>
    <dbReference type="NCBI Taxonomy" id="9823"/>
    <lineage>
        <taxon>Eukaryota</taxon>
        <taxon>Metazoa</taxon>
        <taxon>Chordata</taxon>
        <taxon>Craniata</taxon>
        <taxon>Vertebrata</taxon>
        <taxon>Euteleostomi</taxon>
        <taxon>Mammalia</taxon>
        <taxon>Eutheria</taxon>
        <taxon>Laurasiatheria</taxon>
        <taxon>Artiodactyla</taxon>
        <taxon>Suina</taxon>
        <taxon>Suidae</taxon>
        <taxon>Sus</taxon>
    </lineage>
</organism>
<accession>Q9MZ16</accession>
<gene>
    <name evidence="3" type="primary">VDAC1</name>
</gene>
<sequence length="283" mass="30727">MAVPPTYADLGKSARDVFTKGYGFGLIKLDLKTKSENGLEFTSSGSANTETTKVTGSLETKYRWTEYGLTFTEKWNTDNTLGTEITVEDQLARGLKLTFDSSFSPNTGKKNAKIKTGYKREHVNLGCDVDFDIAGPSIRGALVLGYEGWLAGYQMNFETAKSRVTQSNFAVGYKTDEFQLHTNVNDGTEFGGSIYQKVNKKLETAVNLAWTAGNSNTRFGIAAKYQIDPDACFSAKVNNSSLIGLGYTQTLKPGIKLTLSALLDGKNVNAGGHKLGLGLEFQA</sequence>
<name>VDAC1_PIG</name>
<feature type="initiator methionine" description="Removed" evidence="3">
    <location>
        <position position="1"/>
    </location>
</feature>
<feature type="chain" id="PRO_0000050501" description="Non-selective voltage-gated ion channel VDAC1">
    <location>
        <begin position="2"/>
        <end position="283"/>
    </location>
</feature>
<feature type="transmembrane region" description="Beta stranded" evidence="3">
    <location>
        <begin position="26"/>
        <end position="35"/>
    </location>
</feature>
<feature type="transmembrane region" description="Beta stranded" evidence="3">
    <location>
        <begin position="39"/>
        <end position="47"/>
    </location>
</feature>
<feature type="transmembrane region" description="Beta stranded" evidence="3">
    <location>
        <begin position="54"/>
        <end position="64"/>
    </location>
</feature>
<feature type="transmembrane region" description="Beta stranded" evidence="3">
    <location>
        <begin position="69"/>
        <end position="76"/>
    </location>
</feature>
<feature type="transmembrane region" description="Beta stranded" evidence="3">
    <location>
        <begin position="80"/>
        <end position="89"/>
    </location>
</feature>
<feature type="transmembrane region" description="Beta stranded" evidence="3">
    <location>
        <begin position="95"/>
        <end position="104"/>
    </location>
</feature>
<feature type="transmembrane region" description="Beta stranded" evidence="3">
    <location>
        <begin position="111"/>
        <end position="120"/>
    </location>
</feature>
<feature type="transmembrane region" description="Beta stranded" evidence="3">
    <location>
        <begin position="123"/>
        <end position="130"/>
    </location>
</feature>
<feature type="transmembrane region" description="Beta stranded" evidence="3">
    <location>
        <begin position="137"/>
        <end position="145"/>
    </location>
</feature>
<feature type="transmembrane region" description="Beta stranded" evidence="3">
    <location>
        <begin position="150"/>
        <end position="158"/>
    </location>
</feature>
<feature type="transmembrane region" description="Beta stranded" evidence="3">
    <location>
        <begin position="163"/>
        <end position="175"/>
    </location>
</feature>
<feature type="transmembrane region" description="Beta stranded" evidence="3">
    <location>
        <begin position="178"/>
        <end position="185"/>
    </location>
</feature>
<feature type="transmembrane region" description="Beta stranded" evidence="3">
    <location>
        <begin position="189"/>
        <end position="198"/>
    </location>
</feature>
<feature type="transmembrane region" description="Beta stranded" evidence="3">
    <location>
        <begin position="202"/>
        <end position="211"/>
    </location>
</feature>
<feature type="transmembrane region" description="Beta stranded" evidence="3">
    <location>
        <begin position="218"/>
        <end position="227"/>
    </location>
</feature>
<feature type="transmembrane region" description="Beta stranded" evidence="3">
    <location>
        <begin position="231"/>
        <end position="238"/>
    </location>
</feature>
<feature type="transmembrane region" description="Beta stranded" evidence="3">
    <location>
        <begin position="242"/>
        <end position="251"/>
    </location>
</feature>
<feature type="transmembrane region" description="Beta stranded" evidence="3">
    <location>
        <begin position="254"/>
        <end position="263"/>
    </location>
</feature>
<feature type="transmembrane region" description="Beta stranded" evidence="3">
    <location>
        <begin position="273"/>
        <end position="282"/>
    </location>
</feature>
<feature type="binding site" evidence="5">
    <location>
        <position position="12"/>
    </location>
    <ligand>
        <name>ATP</name>
        <dbReference type="ChEBI" id="CHEBI:30616"/>
    </ligand>
</feature>
<feature type="binding site" evidence="5">
    <location>
        <position position="20"/>
    </location>
    <ligand>
        <name>ATP</name>
        <dbReference type="ChEBI" id="CHEBI:30616"/>
    </ligand>
</feature>
<feature type="binding site" evidence="3">
    <location>
        <begin position="242"/>
        <end position="244"/>
    </location>
    <ligand>
        <name>NAD(+)</name>
        <dbReference type="ChEBI" id="CHEBI:57540"/>
    </ligand>
</feature>
<feature type="binding site" evidence="3">
    <location>
        <begin position="260"/>
        <end position="264"/>
    </location>
    <ligand>
        <name>NAD(+)</name>
        <dbReference type="ChEBI" id="CHEBI:57540"/>
    </ligand>
</feature>
<feature type="site" description="Involved in ceramide and phosphatidylcholine binding. Critical for channel structural stability and gating" evidence="3">
    <location>
        <position position="73"/>
    </location>
</feature>
<feature type="modified residue" description="N-acetylalanine" evidence="3">
    <location>
        <position position="2"/>
    </location>
</feature>
<feature type="modified residue" description="Phosphoserine" evidence="6">
    <location>
        <position position="13"/>
    </location>
</feature>
<feature type="modified residue" description="Phosphothreonine" evidence="5">
    <location>
        <position position="19"/>
    </location>
</feature>
<feature type="modified residue" description="N6-acetyllysine; alternate" evidence="3">
    <location>
        <position position="20"/>
    </location>
</feature>
<feature type="modified residue" description="N6-succinyllysine; alternate" evidence="5">
    <location>
        <position position="20"/>
    </location>
</feature>
<feature type="modified residue" description="Phosphotyrosine" evidence="5">
    <location>
        <position position="67"/>
    </location>
</feature>
<feature type="modified residue" description="Phosphothreonine" evidence="3">
    <location>
        <position position="107"/>
    </location>
</feature>
<feature type="modified residue" description="N6-acetyllysine; alternate" evidence="5">
    <location>
        <position position="109"/>
    </location>
</feature>
<feature type="modified residue" description="Phosphoserine; by NEK1" evidence="3">
    <location>
        <position position="193"/>
    </location>
</feature>
<feature type="modified residue" description="Phosphoserine" evidence="3">
    <location>
        <position position="240"/>
    </location>
</feature>
<feature type="modified residue" description="N6-acetyllysine" evidence="5">
    <location>
        <position position="252"/>
    </location>
</feature>
<feature type="modified residue" description="N6-acetyllysine; alternate" evidence="3">
    <location>
        <position position="266"/>
    </location>
</feature>
<feature type="cross-link" description="Glycyl lysine isopeptide (Lys-Gly) (interchain with G-Cter in ubiquitin)" evidence="3">
    <location>
        <position position="12"/>
    </location>
</feature>
<feature type="cross-link" description="Glycyl lysine isopeptide (Lys-Gly) (interchain with G-Cter in ubiquitin); alternate" evidence="4">
    <location>
        <position position="20"/>
    </location>
</feature>
<feature type="cross-link" description="Glycyl lysine isopeptide (Lys-Gly) (interchain with G-Cter in ubiquitin)" evidence="3">
    <location>
        <position position="53"/>
    </location>
</feature>
<feature type="cross-link" description="Glycyl lysine isopeptide (Lys-Gly) (interchain with G-Cter in ubiquitin)" evidence="3">
    <location>
        <position position="61"/>
    </location>
</feature>
<feature type="cross-link" description="Glycyl lysine isopeptide (Lys-Gly) (interchain with G-Cter in ubiquitin); alternate" evidence="3">
    <location>
        <position position="109"/>
    </location>
</feature>
<feature type="cross-link" description="Glycyl lysine isopeptide (Lys-Gly) (interchain with G-Cter in ubiquitin)" evidence="3">
    <location>
        <position position="110"/>
    </location>
</feature>
<feature type="cross-link" description="Glycyl lysine isopeptide (Lys-Gly) (interchain with G-Cter in ubiquitin)" evidence="3">
    <location>
        <position position="161"/>
    </location>
</feature>
<feature type="cross-link" description="Glycyl lysine isopeptide (Lys-Gly) (interchain with G-Cter in ubiquitin); alternate" evidence="3">
    <location>
        <position position="266"/>
    </location>
</feature>
<feature type="cross-link" description="Glycyl lysine isopeptide (Lys-Gly) (interchain with G-Cter in ubiquitin)" evidence="3">
    <location>
        <position position="274"/>
    </location>
</feature>
<evidence type="ECO:0000250" key="1"/>
<evidence type="ECO:0000250" key="2">
    <source>
        <dbReference type="UniProtKB" id="A0A6P7EFR0"/>
    </source>
</evidence>
<evidence type="ECO:0000250" key="3">
    <source>
        <dbReference type="UniProtKB" id="P21796"/>
    </source>
</evidence>
<evidence type="ECO:0000250" key="4">
    <source>
        <dbReference type="UniProtKB" id="P45880"/>
    </source>
</evidence>
<evidence type="ECO:0000250" key="5">
    <source>
        <dbReference type="UniProtKB" id="Q60932"/>
    </source>
</evidence>
<evidence type="ECO:0000250" key="6">
    <source>
        <dbReference type="UniProtKB" id="Q9Z2L0"/>
    </source>
</evidence>
<evidence type="ECO:0000305" key="7"/>
<protein>
    <recommendedName>
        <fullName evidence="3">Non-selective voltage-gated ion channel VDAC1</fullName>
    </recommendedName>
    <alternativeName>
        <fullName>Voltage-dependent anion-selective channel protein 1</fullName>
        <shortName>VDAC-1</shortName>
    </alternativeName>
</protein>
<dbReference type="EMBL" id="AF268461">
    <property type="protein sequence ID" value="AAF78963.1"/>
    <property type="molecule type" value="mRNA"/>
</dbReference>
<dbReference type="RefSeq" id="NP_999125.1">
    <property type="nucleotide sequence ID" value="NM_213960.1"/>
</dbReference>
<dbReference type="RefSeq" id="XP_005653005.1">
    <property type="nucleotide sequence ID" value="XM_005652948.3"/>
</dbReference>
<dbReference type="RefSeq" id="XP_005653006.1">
    <property type="nucleotide sequence ID" value="XM_005652949.3"/>
</dbReference>
<dbReference type="RefSeq" id="XP_005653007.1">
    <property type="nucleotide sequence ID" value="XM_005652950.3"/>
</dbReference>
<dbReference type="RefSeq" id="XP_020936424.1">
    <property type="nucleotide sequence ID" value="XM_021080765.1"/>
</dbReference>
<dbReference type="BMRB" id="Q9MZ16"/>
<dbReference type="SMR" id="Q9MZ16"/>
<dbReference type="FunCoup" id="Q9MZ16">
    <property type="interactions" value="1806"/>
</dbReference>
<dbReference type="STRING" id="9823.ENSSSCP00000047193"/>
<dbReference type="iPTMnet" id="Q9MZ16"/>
<dbReference type="PaxDb" id="9823-ENSSSCP00000015206"/>
<dbReference type="PeptideAtlas" id="Q9MZ16"/>
<dbReference type="Ensembl" id="ENSSSCT00000058217.3">
    <property type="protein sequence ID" value="ENSSSCP00000036072.1"/>
    <property type="gene ID" value="ENSSSCG00000014296.5"/>
</dbReference>
<dbReference type="Ensembl" id="ENSSSCT00015029477.1">
    <property type="protein sequence ID" value="ENSSSCP00015011599.1"/>
    <property type="gene ID" value="ENSSSCG00015021891.1"/>
</dbReference>
<dbReference type="Ensembl" id="ENSSSCT00025069273.1">
    <property type="protein sequence ID" value="ENSSSCP00025029833.1"/>
    <property type="gene ID" value="ENSSSCG00025050567.1"/>
</dbReference>
<dbReference type="Ensembl" id="ENSSSCT00030006992.1">
    <property type="protein sequence ID" value="ENSSSCP00030003141.1"/>
    <property type="gene ID" value="ENSSSCG00030005103.1"/>
</dbReference>
<dbReference type="Ensembl" id="ENSSSCT00035067895.1">
    <property type="protein sequence ID" value="ENSSSCP00035027513.1"/>
    <property type="gene ID" value="ENSSSCG00035050939.1"/>
</dbReference>
<dbReference type="Ensembl" id="ENSSSCT00045053437.1">
    <property type="protein sequence ID" value="ENSSSCP00045037160.1"/>
    <property type="gene ID" value="ENSSSCG00045031086.1"/>
</dbReference>
<dbReference type="Ensembl" id="ENSSSCT00050090144.1">
    <property type="protein sequence ID" value="ENSSSCP00050038715.1"/>
    <property type="gene ID" value="ENSSSCG00050066150.1"/>
</dbReference>
<dbReference type="Ensembl" id="ENSSSCT00055019919.1">
    <property type="protein sequence ID" value="ENSSSCP00055015722.1"/>
    <property type="gene ID" value="ENSSSCG00055010071.1"/>
</dbReference>
<dbReference type="Ensembl" id="ENSSSCT00060065887.1">
    <property type="protein sequence ID" value="ENSSSCP00060028202.1"/>
    <property type="gene ID" value="ENSSSCG00060048503.1"/>
</dbReference>
<dbReference type="Ensembl" id="ENSSSCT00065037080.1">
    <property type="protein sequence ID" value="ENSSSCP00065015590.1"/>
    <property type="gene ID" value="ENSSSCG00065027495.1"/>
</dbReference>
<dbReference type="Ensembl" id="ENSSSCT00070040455.1">
    <property type="protein sequence ID" value="ENSSSCP00070033932.1"/>
    <property type="gene ID" value="ENSSSCG00070020375.1"/>
</dbReference>
<dbReference type="Ensembl" id="ENSSSCT00085048677">
    <property type="protein sequence ID" value="ENSSSCP00085034099"/>
    <property type="gene ID" value="ENSSSCG00085025331"/>
</dbReference>
<dbReference type="Ensembl" id="ENSSSCT00105054595">
    <property type="protein sequence ID" value="ENSSSCP00105038390"/>
    <property type="gene ID" value="ENSSSCG00105028477"/>
</dbReference>
<dbReference type="Ensembl" id="ENSSSCT00115027660">
    <property type="protein sequence ID" value="ENSSSCP00115026221"/>
    <property type="gene ID" value="ENSSSCG00115015803"/>
</dbReference>
<dbReference type="Ensembl" id="ENSSSCT00130065073">
    <property type="protein sequence ID" value="ENSSSCP00130046680"/>
    <property type="gene ID" value="ENSSSCG00130033244"/>
</dbReference>
<dbReference type="GeneID" id="397010"/>
<dbReference type="KEGG" id="ssc:397010"/>
<dbReference type="CTD" id="7416"/>
<dbReference type="VGNC" id="VGNC:100881">
    <property type="gene designation" value="VDAC1"/>
</dbReference>
<dbReference type="eggNOG" id="KOG3126">
    <property type="taxonomic scope" value="Eukaryota"/>
</dbReference>
<dbReference type="GeneTree" id="ENSGT00950000182869"/>
<dbReference type="HOGENOM" id="CLU_044399_2_0_1"/>
<dbReference type="InParanoid" id="Q9MZ16"/>
<dbReference type="OMA" id="KPCCSHE"/>
<dbReference type="OrthoDB" id="7827681at2759"/>
<dbReference type="TreeFam" id="TF315091"/>
<dbReference type="Reactome" id="R-SSC-5205685">
    <property type="pathway name" value="PINK1-PRKN Mediated Mitophagy"/>
</dbReference>
<dbReference type="Reactome" id="R-SSC-5689880">
    <property type="pathway name" value="Ub-specific processing proteases"/>
</dbReference>
<dbReference type="Reactome" id="R-SSC-70268">
    <property type="pathway name" value="Pyruvate metabolism"/>
</dbReference>
<dbReference type="Proteomes" id="UP000008227">
    <property type="component" value="Chromosome 2"/>
</dbReference>
<dbReference type="Proteomes" id="UP000314985">
    <property type="component" value="Chromosome 2"/>
</dbReference>
<dbReference type="Proteomes" id="UP000694570">
    <property type="component" value="Unplaced"/>
</dbReference>
<dbReference type="Proteomes" id="UP000694571">
    <property type="component" value="Unplaced"/>
</dbReference>
<dbReference type="Proteomes" id="UP000694720">
    <property type="component" value="Unplaced"/>
</dbReference>
<dbReference type="Proteomes" id="UP000694722">
    <property type="component" value="Unplaced"/>
</dbReference>
<dbReference type="Proteomes" id="UP000694723">
    <property type="component" value="Unplaced"/>
</dbReference>
<dbReference type="Proteomes" id="UP000694724">
    <property type="component" value="Unplaced"/>
</dbReference>
<dbReference type="Proteomes" id="UP000694725">
    <property type="component" value="Unplaced"/>
</dbReference>
<dbReference type="Proteomes" id="UP000694726">
    <property type="component" value="Unplaced"/>
</dbReference>
<dbReference type="Proteomes" id="UP000694727">
    <property type="component" value="Unplaced"/>
</dbReference>
<dbReference type="Proteomes" id="UP000694728">
    <property type="component" value="Unplaced"/>
</dbReference>
<dbReference type="Bgee" id="ENSSSCG00000014296">
    <property type="expression patterns" value="Expressed in psoas major muscle and 45 other cell types or tissues"/>
</dbReference>
<dbReference type="ExpressionAtlas" id="Q9MZ16">
    <property type="expression patterns" value="baseline and differential"/>
</dbReference>
<dbReference type="GO" id="GO:0016020">
    <property type="term" value="C:membrane"/>
    <property type="evidence" value="ECO:0000250"/>
    <property type="project" value="UniProtKB"/>
</dbReference>
<dbReference type="GO" id="GO:0045121">
    <property type="term" value="C:membrane raft"/>
    <property type="evidence" value="ECO:0007669"/>
    <property type="project" value="UniProtKB-SubCell"/>
</dbReference>
<dbReference type="GO" id="GO:0005741">
    <property type="term" value="C:mitochondrial outer membrane"/>
    <property type="evidence" value="ECO:0000250"/>
    <property type="project" value="UniProtKB"/>
</dbReference>
<dbReference type="GO" id="GO:0005757">
    <property type="term" value="C:mitochondrial permeability transition pore complex"/>
    <property type="evidence" value="ECO:0000250"/>
    <property type="project" value="UniProtKB"/>
</dbReference>
<dbReference type="GO" id="GO:0005886">
    <property type="term" value="C:plasma membrane"/>
    <property type="evidence" value="ECO:0000250"/>
    <property type="project" value="UniProtKB"/>
</dbReference>
<dbReference type="GO" id="GO:0005524">
    <property type="term" value="F:ATP binding"/>
    <property type="evidence" value="ECO:0007669"/>
    <property type="project" value="UniProtKB-KW"/>
</dbReference>
<dbReference type="GO" id="GO:0008142">
    <property type="term" value="F:oxysterol binding"/>
    <property type="evidence" value="ECO:0000250"/>
    <property type="project" value="UniProtKB"/>
</dbReference>
<dbReference type="GO" id="GO:0015288">
    <property type="term" value="F:porin activity"/>
    <property type="evidence" value="ECO:0007669"/>
    <property type="project" value="UniProtKB-KW"/>
</dbReference>
<dbReference type="GO" id="GO:0022832">
    <property type="term" value="F:voltage-gated channel activity"/>
    <property type="evidence" value="ECO:0000250"/>
    <property type="project" value="UniProtKB"/>
</dbReference>
<dbReference type="GO" id="GO:0008308">
    <property type="term" value="F:voltage-gated monoatomic anion channel activity"/>
    <property type="evidence" value="ECO:0000250"/>
    <property type="project" value="UniProtKB"/>
</dbReference>
<dbReference type="GO" id="GO:0005244">
    <property type="term" value="F:voltage-gated monoatomic ion channel activity"/>
    <property type="evidence" value="ECO:0000250"/>
    <property type="project" value="UniProtKB"/>
</dbReference>
<dbReference type="GO" id="GO:0006915">
    <property type="term" value="P:apoptotic process"/>
    <property type="evidence" value="ECO:0000250"/>
    <property type="project" value="UniProtKB"/>
</dbReference>
<dbReference type="GO" id="GO:0036444">
    <property type="term" value="P:calcium import into the mitochondrion"/>
    <property type="evidence" value="ECO:0000250"/>
    <property type="project" value="UniProtKB"/>
</dbReference>
<dbReference type="GO" id="GO:0006869">
    <property type="term" value="P:lipid transport"/>
    <property type="evidence" value="ECO:0007669"/>
    <property type="project" value="UniProtKB-KW"/>
</dbReference>
<dbReference type="GO" id="GO:0006820">
    <property type="term" value="P:monoatomic anion transport"/>
    <property type="evidence" value="ECO:0000250"/>
    <property type="project" value="UniProtKB"/>
</dbReference>
<dbReference type="CDD" id="cd07306">
    <property type="entry name" value="Porin3_VDAC"/>
    <property type="match status" value="1"/>
</dbReference>
<dbReference type="FunFam" id="2.40.160.10:FF:000001">
    <property type="entry name" value="Voltage-dependent anion-selective channel protein 2"/>
    <property type="match status" value="1"/>
</dbReference>
<dbReference type="Gene3D" id="2.40.160.10">
    <property type="entry name" value="Porin"/>
    <property type="match status" value="1"/>
</dbReference>
<dbReference type="InterPro" id="IPR023614">
    <property type="entry name" value="Porin_dom_sf"/>
</dbReference>
<dbReference type="InterPro" id="IPR001925">
    <property type="entry name" value="Porin_Euk"/>
</dbReference>
<dbReference type="InterPro" id="IPR027246">
    <property type="entry name" value="Porin_Euk/Tom40"/>
</dbReference>
<dbReference type="PANTHER" id="PTHR11743">
    <property type="entry name" value="VOLTAGE-DEPENDENT ANION-SELECTIVE CHANNEL"/>
    <property type="match status" value="1"/>
</dbReference>
<dbReference type="PANTHER" id="PTHR11743:SF13">
    <property type="entry name" value="VOLTAGE-DEPENDENT ANION-SELECTIVE CHANNEL PROTEIN 1"/>
    <property type="match status" value="1"/>
</dbReference>
<dbReference type="Pfam" id="PF01459">
    <property type="entry name" value="Porin_3"/>
    <property type="match status" value="1"/>
</dbReference>
<dbReference type="PRINTS" id="PR00185">
    <property type="entry name" value="EUKARYTPORIN"/>
</dbReference>
<dbReference type="PROSITE" id="PS00558">
    <property type="entry name" value="EUKARYOTIC_PORIN"/>
    <property type="match status" value="1"/>
</dbReference>
<comment type="function">
    <text evidence="3 5">Non-selective voltage-gated ion channel that mediates the transport of anions and cations through the mitochondrion outer membrane and plasma membrane. The channel at the outer mitochondrial membrane allows diffusion of small hydrophilic molecules; in the plasma membrane it is involved in cell volume regulation and apoptosis. It adopts an open conformation at low or zero membrane potential and a closed conformation at potentials above 30-40 mV. The open state has a weak anion selectivity whereas the closed state is cation-selective. Binds various signaling molecules, including the sphingolipid ceramide, the phospholipid phosphatidylcholine, and the sterols cholesterol and oxysterol. In depolarized mitochondria, acts downstream of PRKN and PINK1 to promote mitophagy or prevent apoptosis; polyubiquitination by PRKN promotes mitophagy, while monoubiquitination by PRKN decreases mitochondrial calcium influx which ultimately inhibits apoptosis. May participate in the formation of the permeability transition pore complex (PTPC) responsible for the release of mitochondrial products that triggers apoptosis. May mediate ATP export from cells (By similarity). Part of a complex composed of HSPA9, ITPR1 and VDAC1 that regulates mitochondrial calcium-dependent apoptosis by facilitating calcium transport from the ER lumen to the mitochondria intermembrane space thus providing calcium for the downstream calcium channel MCU that directly releases it into mitochondria matrix (By similarity). Mediates cytochrome c efflux (By similarity).</text>
</comment>
<comment type="function">
    <text evidence="3">Catalyzes the scrambling of phospholipids across the outer mitochondrial membrane; the mechanism is unrelated to channel activity and is capable of translocating both anionic and zwitterionic phospholipids.</text>
</comment>
<comment type="catalytic activity">
    <reaction evidence="3">
        <text>chloride(in) = chloride(out)</text>
        <dbReference type="Rhea" id="RHEA:29823"/>
        <dbReference type="ChEBI" id="CHEBI:17996"/>
    </reaction>
</comment>
<comment type="catalytic activity">
    <reaction evidence="3">
        <text>K(+)(in) = K(+)(out)</text>
        <dbReference type="Rhea" id="RHEA:29463"/>
        <dbReference type="ChEBI" id="CHEBI:29103"/>
    </reaction>
</comment>
<comment type="catalytic activity">
    <reaction evidence="3">
        <text>ATP(in) = ATP(out)</text>
        <dbReference type="Rhea" id="RHEA:75687"/>
        <dbReference type="ChEBI" id="CHEBI:30616"/>
    </reaction>
</comment>
<comment type="catalytic activity">
    <reaction evidence="6">
        <text>Ca(2+)(in) = Ca(2+)(out)</text>
        <dbReference type="Rhea" id="RHEA:29671"/>
        <dbReference type="ChEBI" id="CHEBI:29108"/>
    </reaction>
</comment>
<comment type="catalytic activity">
    <reaction evidence="6">
        <text>Na(+)(in) = Na(+)(out)</text>
        <dbReference type="Rhea" id="RHEA:34963"/>
        <dbReference type="ChEBI" id="CHEBI:29101"/>
    </reaction>
</comment>
<comment type="catalytic activity">
    <reaction evidence="6">
        <text>Mg(2+)(in) = Mg(2+)(out)</text>
        <dbReference type="Rhea" id="RHEA:29827"/>
        <dbReference type="ChEBI" id="CHEBI:18420"/>
    </reaction>
</comment>
<comment type="catalytic activity">
    <reaction evidence="2">
        <text>L-glutamate(out) = L-glutamate(in)</text>
        <dbReference type="Rhea" id="RHEA:66336"/>
        <dbReference type="ChEBI" id="CHEBI:29985"/>
    </reaction>
</comment>
<comment type="catalytic activity">
    <reaction evidence="2">
        <text>dopamine(out) = dopamine(in)</text>
        <dbReference type="Rhea" id="RHEA:73863"/>
        <dbReference type="ChEBI" id="CHEBI:59905"/>
    </reaction>
</comment>
<comment type="catalytic activity">
    <reaction evidence="2">
        <text>acetylcholine(in) = acetylcholine(out)</text>
        <dbReference type="Rhea" id="RHEA:74663"/>
        <dbReference type="ChEBI" id="CHEBI:15355"/>
    </reaction>
</comment>
<comment type="catalytic activity">
    <reaction evidence="3">
        <text>Fe(III)-[cytochrome c](out) = Fe(III)-[cytochrome c](in)</text>
        <dbReference type="Rhea" id="RHEA:79311"/>
        <dbReference type="Rhea" id="RHEA-COMP:14399"/>
        <dbReference type="ChEBI" id="CHEBI:29034"/>
    </reaction>
</comment>
<comment type="catalytic activity">
    <reaction evidence="3">
        <text>a 1,2-diacyl-sn-glycero-3-phosphocholine(in) = a 1,2-diacyl-sn-glycero-3-phosphocholine(out)</text>
        <dbReference type="Rhea" id="RHEA:38571"/>
        <dbReference type="ChEBI" id="CHEBI:57643"/>
    </reaction>
</comment>
<comment type="catalytic activity">
    <reaction evidence="3">
        <text>a 1,2-diacyl-sn-glycero-3-phospho-L-serine(in) = a 1,2-diacyl-sn-glycero-3-phospho-L-serine(out)</text>
        <dbReference type="Rhea" id="RHEA:38663"/>
        <dbReference type="ChEBI" id="CHEBI:57262"/>
    </reaction>
</comment>
<comment type="activity regulation">
    <text evidence="3">Inhibited by nitric oxide.</text>
</comment>
<comment type="subunit">
    <text evidence="3 6">Homodimer and homotrimer; in response to cyclic AMP or calcium; oligomerization is required for scramblase activity. Component of the mitochondrial permeability transition pore complex (mPTPC), at least composed of SPG7, VDAC1 and PPIF. Interacts with SPG7, NIPSNAP2 and SLC25A30. Interacts with hexokinases including HK1. The HK1-VDAC1 complex interacts with ATF2. Interacts with BCL2L1. Interacts with BAK1. Interacts with RTL10/BOP (via BH3 domain). Interacts with amyloid-beta and APP; induces VDAC1 dephosphorylation. Interacts with TMEM41B. Interacts with BCAP31 (By similarity). Interacts with HSPA9; this interaction couples ITPR1 to VDAC1 (By similarity).</text>
</comment>
<comment type="subcellular location">
    <subcellularLocation>
        <location evidence="3">Mitochondrion outer membrane</location>
        <topology evidence="3">Multi-pass membrane protein</topology>
    </subcellularLocation>
    <subcellularLocation>
        <location evidence="3">Cell membrane</location>
        <topology evidence="3">Multi-pass membrane protein</topology>
    </subcellularLocation>
    <subcellularLocation>
        <location evidence="3">Membrane raft</location>
        <topology evidence="3">Multi-pass membrane protein</topology>
    </subcellularLocation>
    <text evidence="6">Found in a complex with HSPA9 and VDAC1 at the endoplasmic reticulum-mitochondria contact sites.</text>
</comment>
<comment type="domain">
    <text evidence="3">Consists mainly of a membrane-spanning beta-barrel formed by 19 beta-strands. The helical N-terminus folds back into the pore opening and plays a role in voltage-gated channel activity.</text>
</comment>
<comment type="PTM">
    <text evidence="3">Phosphorylation at Ser-193 by NEK1 promotes the closed conformational state preventing excessive mitochondrial membrane permeability and subsequent apoptotic cell death after injury. Phosphorylation by the AKT-GSK3B axis stabilizes the protein probably by preventing ubiquitin-mediated proteasomal degradation.</text>
</comment>
<comment type="PTM">
    <text evidence="3">Ubiquitinated. Undergoes monoubiquitination and polyubiquitination by PRKN; monoubiquitination at Lys-274 inhibits apoptosis, whereas polyubiquitination leads to its degradation and promotes mitophagy. Deubiquitinated by USP30.</text>
</comment>
<comment type="miscellaneous">
    <text evidence="1">Dicyclohexylcarbodiimide (DCCD) binding on Glu-73 inhibits hexokinase binding in vitro.</text>
</comment>
<comment type="similarity">
    <text evidence="7">Belongs to the eukaryotic mitochondrial porin family.</text>
</comment>
<reference key="1">
    <citation type="submission" date="2000-05" db="EMBL/GenBank/DDBJ databases">
        <title>Ion channels in the lens.</title>
        <authorList>
            <person name="Rae J.L."/>
        </authorList>
    </citation>
    <scope>NUCLEOTIDE SEQUENCE [MRNA]</scope>
    <source>
        <tissue>Lens</tissue>
    </source>
</reference>